<feature type="chain" id="PRO_0000297271" description="3-methyl-2-oxobutanoate hydroxymethyltransferase">
    <location>
        <begin position="1"/>
        <end position="265"/>
    </location>
</feature>
<feature type="active site" description="Proton acceptor" evidence="1">
    <location>
        <position position="180"/>
    </location>
</feature>
<feature type="binding site" evidence="1">
    <location>
        <begin position="43"/>
        <end position="44"/>
    </location>
    <ligand>
        <name>3-methyl-2-oxobutanoate</name>
        <dbReference type="ChEBI" id="CHEBI:11851"/>
    </ligand>
</feature>
<feature type="binding site" evidence="1">
    <location>
        <position position="43"/>
    </location>
    <ligand>
        <name>Mg(2+)</name>
        <dbReference type="ChEBI" id="CHEBI:18420"/>
    </ligand>
</feature>
<feature type="binding site" evidence="1">
    <location>
        <position position="82"/>
    </location>
    <ligand>
        <name>3-methyl-2-oxobutanoate</name>
        <dbReference type="ChEBI" id="CHEBI:11851"/>
    </ligand>
</feature>
<feature type="binding site" evidence="1">
    <location>
        <position position="82"/>
    </location>
    <ligand>
        <name>Mg(2+)</name>
        <dbReference type="ChEBI" id="CHEBI:18420"/>
    </ligand>
</feature>
<feature type="binding site" evidence="1">
    <location>
        <position position="111"/>
    </location>
    <ligand>
        <name>3-methyl-2-oxobutanoate</name>
        <dbReference type="ChEBI" id="CHEBI:11851"/>
    </ligand>
</feature>
<feature type="binding site" evidence="1">
    <location>
        <position position="113"/>
    </location>
    <ligand>
        <name>Mg(2+)</name>
        <dbReference type="ChEBI" id="CHEBI:18420"/>
    </ligand>
</feature>
<keyword id="KW-0963">Cytoplasm</keyword>
<keyword id="KW-0460">Magnesium</keyword>
<keyword id="KW-0479">Metal-binding</keyword>
<keyword id="KW-0566">Pantothenate biosynthesis</keyword>
<keyword id="KW-0808">Transferase</keyword>
<sequence length="265" mass="28864">MKSVLGFKKAKVTQEKISMVTCYDYTLAKIINSTDIDCILVGDSGGMVLLGKKNTTYTTLDDMQFMTQAVANGATDKFIVADLPFMSYRQSLETTMQAVMALIQSGAHAIKLEGSSGNLDIIKHIVDSGVPVMGHIGMTPQFINSFGGFKVQGRTEEAAKHLLEEAKLLEQAGCFGIVLECIPANIAKDITQNLDIPTIGIGAGSNTDGQILVLQDMLGMNTDFQPKFVKKYIDGSKLFSDAINTYVKETKANTFPTKEHCYDYC</sequence>
<organism>
    <name type="scientific">Francisella tularensis subsp. tularensis (strain WY96-3418)</name>
    <dbReference type="NCBI Taxonomy" id="418136"/>
    <lineage>
        <taxon>Bacteria</taxon>
        <taxon>Pseudomonadati</taxon>
        <taxon>Pseudomonadota</taxon>
        <taxon>Gammaproteobacteria</taxon>
        <taxon>Thiotrichales</taxon>
        <taxon>Francisellaceae</taxon>
        <taxon>Francisella</taxon>
    </lineage>
</organism>
<evidence type="ECO:0000255" key="1">
    <source>
        <dbReference type="HAMAP-Rule" id="MF_00156"/>
    </source>
</evidence>
<reference key="1">
    <citation type="journal article" date="2007" name="PLoS ONE">
        <title>Complete genomic characterization of a pathogenic A.II strain of Francisella tularensis subspecies tularensis.</title>
        <authorList>
            <person name="Beckstrom-Sternberg S.M."/>
            <person name="Auerbach R.K."/>
            <person name="Godbole S."/>
            <person name="Pearson J.V."/>
            <person name="Beckstrom-Sternberg J.S."/>
            <person name="Deng Z."/>
            <person name="Munk C."/>
            <person name="Kubota K."/>
            <person name="Zhou Y."/>
            <person name="Bruce D."/>
            <person name="Noronha J."/>
            <person name="Scheuermann R.H."/>
            <person name="Wang A."/>
            <person name="Wei X."/>
            <person name="Wang J."/>
            <person name="Hao J."/>
            <person name="Wagner D.M."/>
            <person name="Brettin T.S."/>
            <person name="Brown N."/>
            <person name="Gilna P."/>
            <person name="Keim P.S."/>
        </authorList>
    </citation>
    <scope>NUCLEOTIDE SEQUENCE [LARGE SCALE GENOMIC DNA]</scope>
    <source>
        <strain>WY96-3418</strain>
    </source>
</reference>
<gene>
    <name evidence="1" type="primary">panB</name>
    <name type="ordered locus">FTW_0499</name>
</gene>
<name>PANB_FRATW</name>
<accession>A4IWW6</accession>
<dbReference type="EC" id="2.1.2.11" evidence="1"/>
<dbReference type="EMBL" id="CP000608">
    <property type="protein sequence ID" value="ABO46418.1"/>
    <property type="molecule type" value="Genomic_DNA"/>
</dbReference>
<dbReference type="RefSeq" id="WP_003025377.1">
    <property type="nucleotide sequence ID" value="NC_009257.1"/>
</dbReference>
<dbReference type="SMR" id="A4IWW6"/>
<dbReference type="KEGG" id="ftw:FTW_0499"/>
<dbReference type="HOGENOM" id="CLU_036645_1_0_6"/>
<dbReference type="UniPathway" id="UPA00028">
    <property type="reaction ID" value="UER00003"/>
</dbReference>
<dbReference type="GO" id="GO:0005737">
    <property type="term" value="C:cytoplasm"/>
    <property type="evidence" value="ECO:0007669"/>
    <property type="project" value="UniProtKB-SubCell"/>
</dbReference>
<dbReference type="GO" id="GO:0003864">
    <property type="term" value="F:3-methyl-2-oxobutanoate hydroxymethyltransferase activity"/>
    <property type="evidence" value="ECO:0007669"/>
    <property type="project" value="UniProtKB-UniRule"/>
</dbReference>
<dbReference type="GO" id="GO:0000287">
    <property type="term" value="F:magnesium ion binding"/>
    <property type="evidence" value="ECO:0007669"/>
    <property type="project" value="TreeGrafter"/>
</dbReference>
<dbReference type="GO" id="GO:0015940">
    <property type="term" value="P:pantothenate biosynthetic process"/>
    <property type="evidence" value="ECO:0007669"/>
    <property type="project" value="UniProtKB-UniRule"/>
</dbReference>
<dbReference type="CDD" id="cd06557">
    <property type="entry name" value="KPHMT-like"/>
    <property type="match status" value="1"/>
</dbReference>
<dbReference type="FunFam" id="3.20.20.60:FF:000003">
    <property type="entry name" value="3-methyl-2-oxobutanoate hydroxymethyltransferase"/>
    <property type="match status" value="1"/>
</dbReference>
<dbReference type="Gene3D" id="3.20.20.60">
    <property type="entry name" value="Phosphoenolpyruvate-binding domains"/>
    <property type="match status" value="1"/>
</dbReference>
<dbReference type="HAMAP" id="MF_00156">
    <property type="entry name" value="PanB"/>
    <property type="match status" value="1"/>
</dbReference>
<dbReference type="InterPro" id="IPR003700">
    <property type="entry name" value="Pantoate_hydroxy_MeTrfase"/>
</dbReference>
<dbReference type="InterPro" id="IPR015813">
    <property type="entry name" value="Pyrv/PenolPyrv_kinase-like_dom"/>
</dbReference>
<dbReference type="InterPro" id="IPR040442">
    <property type="entry name" value="Pyrv_kinase-like_dom_sf"/>
</dbReference>
<dbReference type="NCBIfam" id="TIGR00222">
    <property type="entry name" value="panB"/>
    <property type="match status" value="1"/>
</dbReference>
<dbReference type="NCBIfam" id="NF001452">
    <property type="entry name" value="PRK00311.1"/>
    <property type="match status" value="1"/>
</dbReference>
<dbReference type="PANTHER" id="PTHR20881">
    <property type="entry name" value="3-METHYL-2-OXOBUTANOATE HYDROXYMETHYLTRANSFERASE"/>
    <property type="match status" value="1"/>
</dbReference>
<dbReference type="PANTHER" id="PTHR20881:SF0">
    <property type="entry name" value="3-METHYL-2-OXOBUTANOATE HYDROXYMETHYLTRANSFERASE"/>
    <property type="match status" value="1"/>
</dbReference>
<dbReference type="Pfam" id="PF02548">
    <property type="entry name" value="Pantoate_transf"/>
    <property type="match status" value="1"/>
</dbReference>
<dbReference type="PIRSF" id="PIRSF000388">
    <property type="entry name" value="Pantoate_hydroxy_MeTrfase"/>
    <property type="match status" value="1"/>
</dbReference>
<dbReference type="SUPFAM" id="SSF51621">
    <property type="entry name" value="Phosphoenolpyruvate/pyruvate domain"/>
    <property type="match status" value="1"/>
</dbReference>
<protein>
    <recommendedName>
        <fullName evidence="1">3-methyl-2-oxobutanoate hydroxymethyltransferase</fullName>
        <ecNumber evidence="1">2.1.2.11</ecNumber>
    </recommendedName>
    <alternativeName>
        <fullName evidence="1">Ketopantoate hydroxymethyltransferase</fullName>
        <shortName evidence="1">KPHMT</shortName>
    </alternativeName>
</protein>
<comment type="function">
    <text evidence="1">Catalyzes the reversible reaction in which hydroxymethyl group from 5,10-methylenetetrahydrofolate is transferred onto alpha-ketoisovalerate to form ketopantoate.</text>
</comment>
<comment type="catalytic activity">
    <reaction evidence="1">
        <text>3-methyl-2-oxobutanoate + (6R)-5,10-methylene-5,6,7,8-tetrahydrofolate + H2O = 2-dehydropantoate + (6S)-5,6,7,8-tetrahydrofolate</text>
        <dbReference type="Rhea" id="RHEA:11824"/>
        <dbReference type="ChEBI" id="CHEBI:11561"/>
        <dbReference type="ChEBI" id="CHEBI:11851"/>
        <dbReference type="ChEBI" id="CHEBI:15377"/>
        <dbReference type="ChEBI" id="CHEBI:15636"/>
        <dbReference type="ChEBI" id="CHEBI:57453"/>
        <dbReference type="EC" id="2.1.2.11"/>
    </reaction>
</comment>
<comment type="cofactor">
    <cofactor evidence="1">
        <name>Mg(2+)</name>
        <dbReference type="ChEBI" id="CHEBI:18420"/>
    </cofactor>
    <text evidence="1">Binds 1 Mg(2+) ion per subunit.</text>
</comment>
<comment type="pathway">
    <text evidence="1">Cofactor biosynthesis; (R)-pantothenate biosynthesis; (R)-pantoate from 3-methyl-2-oxobutanoate: step 1/2.</text>
</comment>
<comment type="subunit">
    <text evidence="1">Homodecamer; pentamer of dimers.</text>
</comment>
<comment type="subcellular location">
    <subcellularLocation>
        <location evidence="1">Cytoplasm</location>
    </subcellularLocation>
</comment>
<comment type="similarity">
    <text evidence="1">Belongs to the PanB family.</text>
</comment>
<proteinExistence type="inferred from homology"/>